<organism>
    <name type="scientific">Streptococcus pneumoniae (strain ATCC 700669 / Spain 23F-1)</name>
    <dbReference type="NCBI Taxonomy" id="561276"/>
    <lineage>
        <taxon>Bacteria</taxon>
        <taxon>Bacillati</taxon>
        <taxon>Bacillota</taxon>
        <taxon>Bacilli</taxon>
        <taxon>Lactobacillales</taxon>
        <taxon>Streptococcaceae</taxon>
        <taxon>Streptococcus</taxon>
    </lineage>
</organism>
<keyword id="KW-0687">Ribonucleoprotein</keyword>
<keyword id="KW-0689">Ribosomal protein</keyword>
<keyword id="KW-0694">RNA-binding</keyword>
<keyword id="KW-0699">rRNA-binding</keyword>
<name>RL20_STRPJ</name>
<proteinExistence type="inferred from homology"/>
<dbReference type="EMBL" id="FM211187">
    <property type="protein sequence ID" value="CAR68712.1"/>
    <property type="molecule type" value="Genomic_DNA"/>
</dbReference>
<dbReference type="RefSeq" id="WP_000124836.1">
    <property type="nucleotide sequence ID" value="NC_011900.1"/>
</dbReference>
<dbReference type="SMR" id="B8ZP58"/>
<dbReference type="GeneID" id="45653697"/>
<dbReference type="KEGG" id="sne:SPN23F08860"/>
<dbReference type="HOGENOM" id="CLU_123265_0_1_9"/>
<dbReference type="GO" id="GO:1990904">
    <property type="term" value="C:ribonucleoprotein complex"/>
    <property type="evidence" value="ECO:0007669"/>
    <property type="project" value="UniProtKB-KW"/>
</dbReference>
<dbReference type="GO" id="GO:0005840">
    <property type="term" value="C:ribosome"/>
    <property type="evidence" value="ECO:0007669"/>
    <property type="project" value="UniProtKB-KW"/>
</dbReference>
<dbReference type="GO" id="GO:0019843">
    <property type="term" value="F:rRNA binding"/>
    <property type="evidence" value="ECO:0007669"/>
    <property type="project" value="UniProtKB-UniRule"/>
</dbReference>
<dbReference type="GO" id="GO:0003735">
    <property type="term" value="F:structural constituent of ribosome"/>
    <property type="evidence" value="ECO:0007669"/>
    <property type="project" value="InterPro"/>
</dbReference>
<dbReference type="GO" id="GO:0000027">
    <property type="term" value="P:ribosomal large subunit assembly"/>
    <property type="evidence" value="ECO:0007669"/>
    <property type="project" value="UniProtKB-UniRule"/>
</dbReference>
<dbReference type="GO" id="GO:0006412">
    <property type="term" value="P:translation"/>
    <property type="evidence" value="ECO:0007669"/>
    <property type="project" value="InterPro"/>
</dbReference>
<dbReference type="CDD" id="cd07026">
    <property type="entry name" value="Ribosomal_L20"/>
    <property type="match status" value="1"/>
</dbReference>
<dbReference type="FunFam" id="1.10.1900.20:FF:000001">
    <property type="entry name" value="50S ribosomal protein L20"/>
    <property type="match status" value="1"/>
</dbReference>
<dbReference type="Gene3D" id="6.10.160.10">
    <property type="match status" value="1"/>
</dbReference>
<dbReference type="Gene3D" id="1.10.1900.20">
    <property type="entry name" value="Ribosomal protein L20"/>
    <property type="match status" value="1"/>
</dbReference>
<dbReference type="HAMAP" id="MF_00382">
    <property type="entry name" value="Ribosomal_bL20"/>
    <property type="match status" value="1"/>
</dbReference>
<dbReference type="InterPro" id="IPR005813">
    <property type="entry name" value="Ribosomal_bL20"/>
</dbReference>
<dbReference type="InterPro" id="IPR049946">
    <property type="entry name" value="RIBOSOMAL_L20_CS"/>
</dbReference>
<dbReference type="InterPro" id="IPR035566">
    <property type="entry name" value="Ribosomal_protein_bL20_C"/>
</dbReference>
<dbReference type="NCBIfam" id="TIGR01032">
    <property type="entry name" value="rplT_bact"/>
    <property type="match status" value="1"/>
</dbReference>
<dbReference type="PANTHER" id="PTHR10986">
    <property type="entry name" value="39S RIBOSOMAL PROTEIN L20"/>
    <property type="match status" value="1"/>
</dbReference>
<dbReference type="Pfam" id="PF00453">
    <property type="entry name" value="Ribosomal_L20"/>
    <property type="match status" value="1"/>
</dbReference>
<dbReference type="PRINTS" id="PR00062">
    <property type="entry name" value="RIBOSOMALL20"/>
</dbReference>
<dbReference type="SUPFAM" id="SSF74731">
    <property type="entry name" value="Ribosomal protein L20"/>
    <property type="match status" value="1"/>
</dbReference>
<dbReference type="PROSITE" id="PS00937">
    <property type="entry name" value="RIBOSOMAL_L20"/>
    <property type="match status" value="1"/>
</dbReference>
<comment type="function">
    <text evidence="1">Binds directly to 23S ribosomal RNA and is necessary for the in vitro assembly process of the 50S ribosomal subunit. It is not involved in the protein synthesizing functions of that subunit.</text>
</comment>
<comment type="similarity">
    <text evidence="1">Belongs to the bacterial ribosomal protein bL20 family.</text>
</comment>
<gene>
    <name evidence="1" type="primary">rplT</name>
    <name type="ordered locus">SPN23F08860</name>
</gene>
<sequence length="119" mass="13693">MARVKGGVVSRKRRKRILKLAKGYYGAKHILFRTAKEQVMNSYYYAYRDRRQKKRDFRKLWITRINAAARMNGLSYSQLMHGLKLAEIEVNRKMLADLAVNDAVAFTALADAAKAKLGK</sequence>
<protein>
    <recommendedName>
        <fullName evidence="1">Large ribosomal subunit protein bL20</fullName>
    </recommendedName>
    <alternativeName>
        <fullName evidence="2">50S ribosomal protein L20</fullName>
    </alternativeName>
</protein>
<evidence type="ECO:0000255" key="1">
    <source>
        <dbReference type="HAMAP-Rule" id="MF_00382"/>
    </source>
</evidence>
<evidence type="ECO:0000305" key="2"/>
<reference key="1">
    <citation type="journal article" date="2009" name="J. Bacteriol.">
        <title>Role of conjugative elements in the evolution of the multidrug-resistant pandemic clone Streptococcus pneumoniae Spain23F ST81.</title>
        <authorList>
            <person name="Croucher N.J."/>
            <person name="Walker D."/>
            <person name="Romero P."/>
            <person name="Lennard N."/>
            <person name="Paterson G.K."/>
            <person name="Bason N.C."/>
            <person name="Mitchell A.M."/>
            <person name="Quail M.A."/>
            <person name="Andrew P.W."/>
            <person name="Parkhill J."/>
            <person name="Bentley S.D."/>
            <person name="Mitchell T.J."/>
        </authorList>
    </citation>
    <scope>NUCLEOTIDE SEQUENCE [LARGE SCALE GENOMIC DNA]</scope>
    <source>
        <strain>ATCC 700669 / Spain 23F-1</strain>
    </source>
</reference>
<feature type="chain" id="PRO_1000193980" description="Large ribosomal subunit protein bL20">
    <location>
        <begin position="1"/>
        <end position="119"/>
    </location>
</feature>
<accession>B8ZP58</accession>